<name>FB211_ARATH</name>
<proteinExistence type="evidence at protein level"/>
<accession>Q2V3N5</accession>
<accession>A4VCN0</accession>
<accession>Q9LYT6</accession>
<reference key="1">
    <citation type="journal article" date="2000" name="Nature">
        <title>Sequence and analysis of chromosome 3 of the plant Arabidopsis thaliana.</title>
        <authorList>
            <person name="Salanoubat M."/>
            <person name="Lemcke K."/>
            <person name="Rieger M."/>
            <person name="Ansorge W."/>
            <person name="Unseld M."/>
            <person name="Fartmann B."/>
            <person name="Valle G."/>
            <person name="Bloecker H."/>
            <person name="Perez-Alonso M."/>
            <person name="Obermaier B."/>
            <person name="Delseny M."/>
            <person name="Boutry M."/>
            <person name="Grivell L.A."/>
            <person name="Mache R."/>
            <person name="Puigdomenech P."/>
            <person name="De Simone V."/>
            <person name="Choisne N."/>
            <person name="Artiguenave F."/>
            <person name="Robert C."/>
            <person name="Brottier P."/>
            <person name="Wincker P."/>
            <person name="Cattolico L."/>
            <person name="Weissenbach J."/>
            <person name="Saurin W."/>
            <person name="Quetier F."/>
            <person name="Schaefer M."/>
            <person name="Mueller-Auer S."/>
            <person name="Gabel C."/>
            <person name="Fuchs M."/>
            <person name="Benes V."/>
            <person name="Wurmbach E."/>
            <person name="Drzonek H."/>
            <person name="Erfle H."/>
            <person name="Jordan N."/>
            <person name="Bangert S."/>
            <person name="Wiedelmann R."/>
            <person name="Kranz H."/>
            <person name="Voss H."/>
            <person name="Holland R."/>
            <person name="Brandt P."/>
            <person name="Nyakatura G."/>
            <person name="Vezzi A."/>
            <person name="D'Angelo M."/>
            <person name="Pallavicini A."/>
            <person name="Toppo S."/>
            <person name="Simionati B."/>
            <person name="Conrad A."/>
            <person name="Hornischer K."/>
            <person name="Kauer G."/>
            <person name="Loehnert T.-H."/>
            <person name="Nordsiek G."/>
            <person name="Reichelt J."/>
            <person name="Scharfe M."/>
            <person name="Schoen O."/>
            <person name="Bargues M."/>
            <person name="Terol J."/>
            <person name="Climent J."/>
            <person name="Navarro P."/>
            <person name="Collado C."/>
            <person name="Perez-Perez A."/>
            <person name="Ottenwaelder B."/>
            <person name="Duchemin D."/>
            <person name="Cooke R."/>
            <person name="Laudie M."/>
            <person name="Berger-Llauro C."/>
            <person name="Purnelle B."/>
            <person name="Masuy D."/>
            <person name="de Haan M."/>
            <person name="Maarse A.C."/>
            <person name="Alcaraz J.-P."/>
            <person name="Cottet A."/>
            <person name="Casacuberta E."/>
            <person name="Monfort A."/>
            <person name="Argiriou A."/>
            <person name="Flores M."/>
            <person name="Liguori R."/>
            <person name="Vitale D."/>
            <person name="Mannhaupt G."/>
            <person name="Haase D."/>
            <person name="Schoof H."/>
            <person name="Rudd S."/>
            <person name="Zaccaria P."/>
            <person name="Mewes H.-W."/>
            <person name="Mayer K.F.X."/>
            <person name="Kaul S."/>
            <person name="Town C.D."/>
            <person name="Koo H.L."/>
            <person name="Tallon L.J."/>
            <person name="Jenkins J."/>
            <person name="Rooney T."/>
            <person name="Rizzo M."/>
            <person name="Walts A."/>
            <person name="Utterback T."/>
            <person name="Fujii C.Y."/>
            <person name="Shea T.P."/>
            <person name="Creasy T.H."/>
            <person name="Haas B."/>
            <person name="Maiti R."/>
            <person name="Wu D."/>
            <person name="Peterson J."/>
            <person name="Van Aken S."/>
            <person name="Pai G."/>
            <person name="Militscher J."/>
            <person name="Sellers P."/>
            <person name="Gill J.E."/>
            <person name="Feldblyum T.V."/>
            <person name="Preuss D."/>
            <person name="Lin X."/>
            <person name="Nierman W.C."/>
            <person name="Salzberg S.L."/>
            <person name="White O."/>
            <person name="Venter J.C."/>
            <person name="Fraser C.M."/>
            <person name="Kaneko T."/>
            <person name="Nakamura Y."/>
            <person name="Sato S."/>
            <person name="Kato T."/>
            <person name="Asamizu E."/>
            <person name="Sasamoto S."/>
            <person name="Kimura T."/>
            <person name="Idesawa K."/>
            <person name="Kawashima K."/>
            <person name="Kishida Y."/>
            <person name="Kiyokawa C."/>
            <person name="Kohara M."/>
            <person name="Matsumoto M."/>
            <person name="Matsuno A."/>
            <person name="Muraki A."/>
            <person name="Nakayama S."/>
            <person name="Nakazaki N."/>
            <person name="Shinpo S."/>
            <person name="Takeuchi C."/>
            <person name="Wada T."/>
            <person name="Watanabe A."/>
            <person name="Yamada M."/>
            <person name="Yasuda M."/>
            <person name="Tabata S."/>
        </authorList>
    </citation>
    <scope>NUCLEOTIDE SEQUENCE [LARGE SCALE GENOMIC DNA]</scope>
    <source>
        <strain>cv. Columbia</strain>
    </source>
</reference>
<reference key="2">
    <citation type="journal article" date="2017" name="Plant J.">
        <title>Araport11: a complete reannotation of the Arabidopsis thaliana reference genome.</title>
        <authorList>
            <person name="Cheng C.Y."/>
            <person name="Krishnakumar V."/>
            <person name="Chan A.P."/>
            <person name="Thibaud-Nissen F."/>
            <person name="Schobel S."/>
            <person name="Town C.D."/>
        </authorList>
    </citation>
    <scope>GENOME REANNOTATION</scope>
    <source>
        <strain>cv. Columbia</strain>
    </source>
</reference>
<reference key="3">
    <citation type="submission" date="2007-04" db="EMBL/GenBank/DDBJ databases">
        <title>Arabidopsis ORF clones.</title>
        <authorList>
            <person name="Bautista-Mercan V.R."/>
            <person name="Kim C.J."/>
            <person name="Chen H."/>
            <person name="Wu S.Y."/>
            <person name="De Los Reyes C."/>
            <person name="Ecker J.R."/>
        </authorList>
    </citation>
    <scope>NUCLEOTIDE SEQUENCE [LARGE SCALE MRNA] (ISOFORM 1)</scope>
    <source>
        <strain>cv. Columbia</strain>
    </source>
</reference>
<reference key="4">
    <citation type="journal article" date="2002" name="Proc. Natl. Acad. Sci. U.S.A.">
        <title>The F-box subunit of the SCF E3 complex is encoded by a diverse superfamily of genes in Arabidopsis.</title>
        <authorList>
            <person name="Gagne J.M."/>
            <person name="Downes B.P."/>
            <person name="Shiu S.-H."/>
            <person name="Durski A.M."/>
            <person name="Vierstra R.D."/>
        </authorList>
    </citation>
    <scope>INTERACTION WITH ASK4</scope>
</reference>
<gene>
    <name type="ordered locus">At3g59000</name>
    <name type="ORF">F17J16.50</name>
</gene>
<protein>
    <recommendedName>
        <fullName>F-box protein At3g59000</fullName>
    </recommendedName>
</protein>
<sequence length="491" mass="55726">MDRVGSLPDELLSHILSFLTTKEAALTSLLSKRWRYLIAFVPNLAFDDIVFLHPEEGKPERDEIRQSFMDFVDRVLALQAESPIKKFSLKCRIGVDSDRVDGWISNVLNRGVSELDLLIILGMTMEDSYRLSPKGFASKTLVKLEIGCGIDISWVAGSIFLPMLKTLVLDSVWFYVDKFETLLLALPALEELVLVDVNWLDSDVTISNASLKTLTIDSDGHLGTFSFDTPSLVYFCYSDYAAEDYPVVKMENLREARIFLLVTDNEIERVRLPINDGLEDAMDNVVLRFGHVGKLMNGIRNVEYLELSADTLEVLSLCCESMPVFKNLKSLAIKSTEGRGWQAMPVLLRNCPHLEFLLIEGLLHHVTDKCGDACDCVPREDKGRSLTSCPVNMLEIHGFRGTKKEMQMIKHFLDYFPSLKEMDIYADEDGPTNLEAPGMFEQITQLFTLYDEFYTCDVQFMVRGSLYKKLTAQCCVFKEENLPHRLVRTLG</sequence>
<evidence type="ECO:0000250" key="1"/>
<evidence type="ECO:0000255" key="2">
    <source>
        <dbReference type="PROSITE-ProRule" id="PRU00080"/>
    </source>
</evidence>
<evidence type="ECO:0000269" key="3">
    <source>
    </source>
</evidence>
<evidence type="ECO:0000305" key="4"/>
<organism>
    <name type="scientific">Arabidopsis thaliana</name>
    <name type="common">Mouse-ear cress</name>
    <dbReference type="NCBI Taxonomy" id="3702"/>
    <lineage>
        <taxon>Eukaryota</taxon>
        <taxon>Viridiplantae</taxon>
        <taxon>Streptophyta</taxon>
        <taxon>Embryophyta</taxon>
        <taxon>Tracheophyta</taxon>
        <taxon>Spermatophyta</taxon>
        <taxon>Magnoliopsida</taxon>
        <taxon>eudicotyledons</taxon>
        <taxon>Gunneridae</taxon>
        <taxon>Pentapetalae</taxon>
        <taxon>rosids</taxon>
        <taxon>malvids</taxon>
        <taxon>Brassicales</taxon>
        <taxon>Brassicaceae</taxon>
        <taxon>Camelineae</taxon>
        <taxon>Arabidopsis</taxon>
    </lineage>
</organism>
<keyword id="KW-0025">Alternative splicing</keyword>
<keyword id="KW-0539">Nucleus</keyword>
<keyword id="KW-1185">Reference proteome</keyword>
<keyword id="KW-0833">Ubl conjugation pathway</keyword>
<feature type="chain" id="PRO_0000283481" description="F-box protein At3g59000">
    <location>
        <begin position="1"/>
        <end position="491"/>
    </location>
</feature>
<feature type="domain" description="F-box" evidence="2">
    <location>
        <begin position="1"/>
        <end position="49"/>
    </location>
</feature>
<feature type="splice variant" id="VSP_024319" description="In isoform 2." evidence="4">
    <location>
        <begin position="122"/>
        <end position="267"/>
    </location>
</feature>
<comment type="function">
    <text evidence="1">Component of SCF(ASK-cullin-F-box) E3 ubiquitin ligase complexes, which may mediate the ubiquitination and subsequent proteasomal degradation of target proteins.</text>
</comment>
<comment type="pathway">
    <text>Protein modification; protein ubiquitination.</text>
</comment>
<comment type="subunit">
    <text evidence="1 3">Part of a SCF (ASK-cullin-F-box) protein ligase complex (By similarity). Interacts with ASK4.</text>
</comment>
<comment type="subcellular location">
    <subcellularLocation>
        <location evidence="1">Nucleus</location>
    </subcellularLocation>
</comment>
<comment type="alternative products">
    <event type="alternative splicing"/>
    <isoform>
        <id>Q2V3N5-1</id>
        <name>1</name>
        <sequence type="displayed"/>
    </isoform>
    <isoform>
        <id>Q2V3N5-2</id>
        <name>2</name>
        <sequence type="described" ref="VSP_024319"/>
    </isoform>
</comment>
<comment type="domain">
    <text evidence="1">The F-box is necessary for the interaction with ASK proteins.</text>
</comment>
<comment type="sequence caution" evidence="4">
    <conflict type="erroneous gene model prediction">
        <sequence resource="EMBL-CDS" id="CAB86928"/>
    </conflict>
</comment>
<dbReference type="EMBL" id="AL163527">
    <property type="protein sequence ID" value="CAB86928.1"/>
    <property type="status" value="ALT_SEQ"/>
    <property type="molecule type" value="Genomic_DNA"/>
</dbReference>
<dbReference type="EMBL" id="CP002686">
    <property type="protein sequence ID" value="AEE79858.1"/>
    <property type="molecule type" value="Genomic_DNA"/>
</dbReference>
<dbReference type="EMBL" id="CP002686">
    <property type="protein sequence ID" value="AEE79859.1"/>
    <property type="molecule type" value="Genomic_DNA"/>
</dbReference>
<dbReference type="EMBL" id="BT030471">
    <property type="protein sequence ID" value="ABP88125.1"/>
    <property type="molecule type" value="mRNA"/>
</dbReference>
<dbReference type="PIR" id="T47782">
    <property type="entry name" value="T47782"/>
</dbReference>
<dbReference type="RefSeq" id="NP_001030887.1">
    <molecule id="Q2V3N5-2"/>
    <property type="nucleotide sequence ID" value="NM_001035810.1"/>
</dbReference>
<dbReference type="RefSeq" id="NP_191459.2">
    <molecule id="Q2V3N5-1"/>
    <property type="nucleotide sequence ID" value="NM_115762.3"/>
</dbReference>
<dbReference type="BioGRID" id="10384">
    <property type="interactions" value="2"/>
</dbReference>
<dbReference type="FunCoup" id="Q2V3N5">
    <property type="interactions" value="940"/>
</dbReference>
<dbReference type="IntAct" id="Q2V3N5">
    <property type="interactions" value="1"/>
</dbReference>
<dbReference type="STRING" id="3702.Q2V3N5"/>
<dbReference type="PaxDb" id="3702-AT3G59000.1"/>
<dbReference type="EnsemblPlants" id="AT3G59000.1">
    <molecule id="Q2V3N5-1"/>
    <property type="protein sequence ID" value="AT3G59000.1"/>
    <property type="gene ID" value="AT3G59000"/>
</dbReference>
<dbReference type="EnsemblPlants" id="AT3G59000.2">
    <molecule id="Q2V3N5-2"/>
    <property type="protein sequence ID" value="AT3G59000.2"/>
    <property type="gene ID" value="AT3G59000"/>
</dbReference>
<dbReference type="GeneID" id="825069"/>
<dbReference type="Gramene" id="AT3G59000.1">
    <molecule id="Q2V3N5-1"/>
    <property type="protein sequence ID" value="AT3G59000.1"/>
    <property type="gene ID" value="AT3G59000"/>
</dbReference>
<dbReference type="Gramene" id="AT3G59000.2">
    <molecule id="Q2V3N5-2"/>
    <property type="protein sequence ID" value="AT3G59000.2"/>
    <property type="gene ID" value="AT3G59000"/>
</dbReference>
<dbReference type="KEGG" id="ath:AT3G59000"/>
<dbReference type="Araport" id="AT3G59000"/>
<dbReference type="TAIR" id="AT3G59000"/>
<dbReference type="eggNOG" id="ENOG502RYTW">
    <property type="taxonomic scope" value="Eukaryota"/>
</dbReference>
<dbReference type="HOGENOM" id="CLU_010721_7_4_1"/>
<dbReference type="InParanoid" id="Q2V3N5"/>
<dbReference type="OMA" id="CEIHRIN"/>
<dbReference type="PhylomeDB" id="Q2V3N5"/>
<dbReference type="UniPathway" id="UPA00143"/>
<dbReference type="PRO" id="PR:Q2V3N5"/>
<dbReference type="Proteomes" id="UP000006548">
    <property type="component" value="Chromosome 3"/>
</dbReference>
<dbReference type="ExpressionAtlas" id="Q2V3N5">
    <property type="expression patterns" value="baseline and differential"/>
</dbReference>
<dbReference type="GO" id="GO:0005634">
    <property type="term" value="C:nucleus"/>
    <property type="evidence" value="ECO:0007669"/>
    <property type="project" value="UniProtKB-SubCell"/>
</dbReference>
<dbReference type="GO" id="GO:0016567">
    <property type="term" value="P:protein ubiquitination"/>
    <property type="evidence" value="ECO:0007669"/>
    <property type="project" value="UniProtKB-UniPathway"/>
</dbReference>
<dbReference type="CDD" id="cd22160">
    <property type="entry name" value="F-box_AtFBL13-like"/>
    <property type="match status" value="1"/>
</dbReference>
<dbReference type="Gene3D" id="1.20.1280.50">
    <property type="match status" value="1"/>
</dbReference>
<dbReference type="Gene3D" id="3.80.10.10">
    <property type="entry name" value="Ribonuclease Inhibitor"/>
    <property type="match status" value="1"/>
</dbReference>
<dbReference type="InterPro" id="IPR036047">
    <property type="entry name" value="F-box-like_dom_sf"/>
</dbReference>
<dbReference type="InterPro" id="IPR053781">
    <property type="entry name" value="F-box_AtFBL13-like"/>
</dbReference>
<dbReference type="InterPro" id="IPR001810">
    <property type="entry name" value="F-box_dom"/>
</dbReference>
<dbReference type="InterPro" id="IPR006566">
    <property type="entry name" value="FBD"/>
</dbReference>
<dbReference type="InterPro" id="IPR055294">
    <property type="entry name" value="FBL60-like"/>
</dbReference>
<dbReference type="InterPro" id="IPR032675">
    <property type="entry name" value="LRR_dom_sf"/>
</dbReference>
<dbReference type="InterPro" id="IPR055411">
    <property type="entry name" value="LRR_FXL15/At3g58940/PEG3-like"/>
</dbReference>
<dbReference type="PANTHER" id="PTHR31293">
    <property type="entry name" value="RNI-LIKE SUPERFAMILY PROTEIN"/>
    <property type="match status" value="1"/>
</dbReference>
<dbReference type="PANTHER" id="PTHR31293:SF16">
    <property type="entry name" value="RNI-LIKE SUPERFAMILY PROTEIN"/>
    <property type="match status" value="1"/>
</dbReference>
<dbReference type="Pfam" id="PF00646">
    <property type="entry name" value="F-box"/>
    <property type="match status" value="1"/>
</dbReference>
<dbReference type="Pfam" id="PF24758">
    <property type="entry name" value="LRR_At5g56370"/>
    <property type="match status" value="1"/>
</dbReference>
<dbReference type="SMART" id="SM00579">
    <property type="entry name" value="FBD"/>
    <property type="match status" value="1"/>
</dbReference>
<dbReference type="SMART" id="SM00256">
    <property type="entry name" value="FBOX"/>
    <property type="match status" value="1"/>
</dbReference>
<dbReference type="SUPFAM" id="SSF81383">
    <property type="entry name" value="F-box domain"/>
    <property type="match status" value="1"/>
</dbReference>
<dbReference type="SUPFAM" id="SSF52047">
    <property type="entry name" value="RNI-like"/>
    <property type="match status" value="1"/>
</dbReference>
<dbReference type="PROSITE" id="PS50181">
    <property type="entry name" value="FBOX"/>
    <property type="match status" value="1"/>
</dbReference>